<protein>
    <recommendedName>
        <fullName evidence="1">Sec-independent protein translocase protein TatA</fullName>
    </recommendedName>
</protein>
<accession>Q7WDX5</accession>
<gene>
    <name evidence="1" type="primary">tatA</name>
    <name type="ordered locus">BB4863</name>
</gene>
<evidence type="ECO:0000255" key="1">
    <source>
        <dbReference type="HAMAP-Rule" id="MF_00236"/>
    </source>
</evidence>
<evidence type="ECO:0000256" key="2">
    <source>
        <dbReference type="SAM" id="MobiDB-lite"/>
    </source>
</evidence>
<comment type="function">
    <text evidence="1">Part of the twin-arginine translocation (Tat) system that transports large folded proteins containing a characteristic twin-arginine motif in their signal peptide across membranes. TatA could form the protein-conducting channel of the Tat system.</text>
</comment>
<comment type="subunit">
    <text evidence="1">The Tat system comprises two distinct complexes: a TatABC complex, containing multiple copies of TatA, TatB and TatC subunits, and a separate TatA complex, containing only TatA subunits. Substrates initially bind to the TatABC complex, which probably triggers association of the separate TatA complex to form the active translocon.</text>
</comment>
<comment type="subcellular location">
    <subcellularLocation>
        <location evidence="1">Cell inner membrane</location>
        <topology evidence="1">Single-pass membrane protein</topology>
    </subcellularLocation>
</comment>
<comment type="similarity">
    <text evidence="1">Belongs to the TatA/E family.</text>
</comment>
<sequence>MGSFSIWHWLIVLVIIALVFGTKKLRNVGSDLGSAVKGFKEGMKDASADKPADQVTQQRVSDDTIDVQAKEKSNS</sequence>
<organism>
    <name type="scientific">Bordetella bronchiseptica (strain ATCC BAA-588 / NCTC 13252 / RB50)</name>
    <name type="common">Alcaligenes bronchisepticus</name>
    <dbReference type="NCBI Taxonomy" id="257310"/>
    <lineage>
        <taxon>Bacteria</taxon>
        <taxon>Pseudomonadati</taxon>
        <taxon>Pseudomonadota</taxon>
        <taxon>Betaproteobacteria</taxon>
        <taxon>Burkholderiales</taxon>
        <taxon>Alcaligenaceae</taxon>
        <taxon>Bordetella</taxon>
    </lineage>
</organism>
<reference key="1">
    <citation type="journal article" date="2003" name="Nat. Genet.">
        <title>Comparative analysis of the genome sequences of Bordetella pertussis, Bordetella parapertussis and Bordetella bronchiseptica.</title>
        <authorList>
            <person name="Parkhill J."/>
            <person name="Sebaihia M."/>
            <person name="Preston A."/>
            <person name="Murphy L.D."/>
            <person name="Thomson N.R."/>
            <person name="Harris D.E."/>
            <person name="Holden M.T.G."/>
            <person name="Churcher C.M."/>
            <person name="Bentley S.D."/>
            <person name="Mungall K.L."/>
            <person name="Cerdeno-Tarraga A.-M."/>
            <person name="Temple L."/>
            <person name="James K.D."/>
            <person name="Harris B."/>
            <person name="Quail M.A."/>
            <person name="Achtman M."/>
            <person name="Atkin R."/>
            <person name="Baker S."/>
            <person name="Basham D."/>
            <person name="Bason N."/>
            <person name="Cherevach I."/>
            <person name="Chillingworth T."/>
            <person name="Collins M."/>
            <person name="Cronin A."/>
            <person name="Davis P."/>
            <person name="Doggett J."/>
            <person name="Feltwell T."/>
            <person name="Goble A."/>
            <person name="Hamlin N."/>
            <person name="Hauser H."/>
            <person name="Holroyd S."/>
            <person name="Jagels K."/>
            <person name="Leather S."/>
            <person name="Moule S."/>
            <person name="Norberczak H."/>
            <person name="O'Neil S."/>
            <person name="Ormond D."/>
            <person name="Price C."/>
            <person name="Rabbinowitsch E."/>
            <person name="Rutter S."/>
            <person name="Sanders M."/>
            <person name="Saunders D."/>
            <person name="Seeger K."/>
            <person name="Sharp S."/>
            <person name="Simmonds M."/>
            <person name="Skelton J."/>
            <person name="Squares R."/>
            <person name="Squares S."/>
            <person name="Stevens K."/>
            <person name="Unwin L."/>
            <person name="Whitehead S."/>
            <person name="Barrell B.G."/>
            <person name="Maskell D.J."/>
        </authorList>
    </citation>
    <scope>NUCLEOTIDE SEQUENCE [LARGE SCALE GENOMIC DNA]</scope>
    <source>
        <strain>ATCC BAA-588 / NCTC 13252 / RB50</strain>
    </source>
</reference>
<name>TATA_BORBR</name>
<keyword id="KW-0997">Cell inner membrane</keyword>
<keyword id="KW-1003">Cell membrane</keyword>
<keyword id="KW-0472">Membrane</keyword>
<keyword id="KW-0653">Protein transport</keyword>
<keyword id="KW-0811">Translocation</keyword>
<keyword id="KW-0812">Transmembrane</keyword>
<keyword id="KW-1133">Transmembrane helix</keyword>
<keyword id="KW-0813">Transport</keyword>
<feature type="chain" id="PRO_1000044354" description="Sec-independent protein translocase protein TatA">
    <location>
        <begin position="1"/>
        <end position="75"/>
    </location>
</feature>
<feature type="transmembrane region" description="Helical" evidence="1">
    <location>
        <begin position="1"/>
        <end position="21"/>
    </location>
</feature>
<feature type="region of interest" description="Disordered" evidence="2">
    <location>
        <begin position="45"/>
        <end position="75"/>
    </location>
</feature>
<proteinExistence type="inferred from homology"/>
<dbReference type="EMBL" id="BX640451">
    <property type="protein sequence ID" value="CAE35226.1"/>
    <property type="molecule type" value="Genomic_DNA"/>
</dbReference>
<dbReference type="RefSeq" id="WP_003815808.1">
    <property type="nucleotide sequence ID" value="NC_002927.3"/>
</dbReference>
<dbReference type="SMR" id="Q7WDX5"/>
<dbReference type="GeneID" id="93206073"/>
<dbReference type="KEGG" id="bbr:BB4863"/>
<dbReference type="eggNOG" id="COG1826">
    <property type="taxonomic scope" value="Bacteria"/>
</dbReference>
<dbReference type="HOGENOM" id="CLU_086034_5_3_4"/>
<dbReference type="Proteomes" id="UP000001027">
    <property type="component" value="Chromosome"/>
</dbReference>
<dbReference type="GO" id="GO:0033281">
    <property type="term" value="C:TAT protein transport complex"/>
    <property type="evidence" value="ECO:0007669"/>
    <property type="project" value="UniProtKB-UniRule"/>
</dbReference>
<dbReference type="GO" id="GO:0008320">
    <property type="term" value="F:protein transmembrane transporter activity"/>
    <property type="evidence" value="ECO:0007669"/>
    <property type="project" value="UniProtKB-UniRule"/>
</dbReference>
<dbReference type="GO" id="GO:0043953">
    <property type="term" value="P:protein transport by the Tat complex"/>
    <property type="evidence" value="ECO:0007669"/>
    <property type="project" value="UniProtKB-UniRule"/>
</dbReference>
<dbReference type="Gene3D" id="1.20.5.3310">
    <property type="match status" value="1"/>
</dbReference>
<dbReference type="HAMAP" id="MF_00236">
    <property type="entry name" value="TatA_E"/>
    <property type="match status" value="1"/>
</dbReference>
<dbReference type="InterPro" id="IPR003369">
    <property type="entry name" value="TatA/B/E"/>
</dbReference>
<dbReference type="InterPro" id="IPR006312">
    <property type="entry name" value="TatA/E"/>
</dbReference>
<dbReference type="NCBIfam" id="NF002813">
    <property type="entry name" value="PRK02958.1"/>
    <property type="match status" value="1"/>
</dbReference>
<dbReference type="NCBIfam" id="TIGR01411">
    <property type="entry name" value="tatAE"/>
    <property type="match status" value="1"/>
</dbReference>
<dbReference type="PANTHER" id="PTHR42982">
    <property type="entry name" value="SEC-INDEPENDENT PROTEIN TRANSLOCASE PROTEIN TATA"/>
    <property type="match status" value="1"/>
</dbReference>
<dbReference type="PANTHER" id="PTHR42982:SF1">
    <property type="entry name" value="SEC-INDEPENDENT PROTEIN TRANSLOCASE PROTEIN TATA"/>
    <property type="match status" value="1"/>
</dbReference>
<dbReference type="Pfam" id="PF02416">
    <property type="entry name" value="TatA_B_E"/>
    <property type="match status" value="1"/>
</dbReference>